<dbReference type="EMBL" id="CP001097">
    <property type="protein sequence ID" value="ACD89478.1"/>
    <property type="molecule type" value="Genomic_DNA"/>
</dbReference>
<dbReference type="RefSeq" id="WP_012465359.1">
    <property type="nucleotide sequence ID" value="NC_010803.1"/>
</dbReference>
<dbReference type="SMR" id="B3EFU5"/>
<dbReference type="STRING" id="290315.Clim_0385"/>
<dbReference type="KEGG" id="cli:Clim_0385"/>
<dbReference type="eggNOG" id="COG0254">
    <property type="taxonomic scope" value="Bacteria"/>
</dbReference>
<dbReference type="HOGENOM" id="CLU_114306_4_3_10"/>
<dbReference type="OrthoDB" id="9803251at2"/>
<dbReference type="Proteomes" id="UP000008841">
    <property type="component" value="Chromosome"/>
</dbReference>
<dbReference type="GO" id="GO:1990904">
    <property type="term" value="C:ribonucleoprotein complex"/>
    <property type="evidence" value="ECO:0007669"/>
    <property type="project" value="UniProtKB-KW"/>
</dbReference>
<dbReference type="GO" id="GO:0005840">
    <property type="term" value="C:ribosome"/>
    <property type="evidence" value="ECO:0007669"/>
    <property type="project" value="UniProtKB-KW"/>
</dbReference>
<dbReference type="GO" id="GO:0019843">
    <property type="term" value="F:rRNA binding"/>
    <property type="evidence" value="ECO:0007669"/>
    <property type="project" value="UniProtKB-KW"/>
</dbReference>
<dbReference type="GO" id="GO:0003735">
    <property type="term" value="F:structural constituent of ribosome"/>
    <property type="evidence" value="ECO:0007669"/>
    <property type="project" value="InterPro"/>
</dbReference>
<dbReference type="GO" id="GO:0006412">
    <property type="term" value="P:translation"/>
    <property type="evidence" value="ECO:0007669"/>
    <property type="project" value="UniProtKB-UniRule"/>
</dbReference>
<dbReference type="Gene3D" id="4.10.830.30">
    <property type="entry name" value="Ribosomal protein L31"/>
    <property type="match status" value="1"/>
</dbReference>
<dbReference type="HAMAP" id="MF_00501">
    <property type="entry name" value="Ribosomal_bL31_1"/>
    <property type="match status" value="1"/>
</dbReference>
<dbReference type="InterPro" id="IPR034704">
    <property type="entry name" value="Ribosomal_bL28/bL31-like_sf"/>
</dbReference>
<dbReference type="InterPro" id="IPR002150">
    <property type="entry name" value="Ribosomal_bL31"/>
</dbReference>
<dbReference type="InterPro" id="IPR027491">
    <property type="entry name" value="Ribosomal_bL31_A"/>
</dbReference>
<dbReference type="InterPro" id="IPR042105">
    <property type="entry name" value="Ribosomal_bL31_sf"/>
</dbReference>
<dbReference type="NCBIfam" id="TIGR00105">
    <property type="entry name" value="L31"/>
    <property type="match status" value="1"/>
</dbReference>
<dbReference type="NCBIfam" id="NF000612">
    <property type="entry name" value="PRK00019.1"/>
    <property type="match status" value="1"/>
</dbReference>
<dbReference type="NCBIfam" id="NF001809">
    <property type="entry name" value="PRK00528.1"/>
    <property type="match status" value="1"/>
</dbReference>
<dbReference type="PANTHER" id="PTHR33280">
    <property type="entry name" value="50S RIBOSOMAL PROTEIN L31, CHLOROPLASTIC"/>
    <property type="match status" value="1"/>
</dbReference>
<dbReference type="PANTHER" id="PTHR33280:SF1">
    <property type="entry name" value="LARGE RIBOSOMAL SUBUNIT PROTEIN BL31C"/>
    <property type="match status" value="1"/>
</dbReference>
<dbReference type="Pfam" id="PF01197">
    <property type="entry name" value="Ribosomal_L31"/>
    <property type="match status" value="1"/>
</dbReference>
<dbReference type="PRINTS" id="PR01249">
    <property type="entry name" value="RIBOSOMALL31"/>
</dbReference>
<dbReference type="SUPFAM" id="SSF143800">
    <property type="entry name" value="L28p-like"/>
    <property type="match status" value="1"/>
</dbReference>
<dbReference type="PROSITE" id="PS01143">
    <property type="entry name" value="RIBOSOMAL_L31"/>
    <property type="match status" value="1"/>
</dbReference>
<protein>
    <recommendedName>
        <fullName evidence="1">Large ribosomal subunit protein bL31</fullName>
    </recommendedName>
    <alternativeName>
        <fullName evidence="2">50S ribosomal protein L31</fullName>
    </alternativeName>
</protein>
<name>RL31_CHLL2</name>
<evidence type="ECO:0000255" key="1">
    <source>
        <dbReference type="HAMAP-Rule" id="MF_00501"/>
    </source>
</evidence>
<evidence type="ECO:0000305" key="2"/>
<comment type="function">
    <text evidence="1">Binds the 23S rRNA.</text>
</comment>
<comment type="subunit">
    <text evidence="1">Part of the 50S ribosomal subunit.</text>
</comment>
<comment type="similarity">
    <text evidence="1">Belongs to the bacterial ribosomal protein bL31 family. Type A subfamily.</text>
</comment>
<reference key="1">
    <citation type="submission" date="2008-05" db="EMBL/GenBank/DDBJ databases">
        <title>Complete sequence of Chlorobium limicola DSM 245.</title>
        <authorList>
            <consortium name="US DOE Joint Genome Institute"/>
            <person name="Lucas S."/>
            <person name="Copeland A."/>
            <person name="Lapidus A."/>
            <person name="Glavina del Rio T."/>
            <person name="Dalin E."/>
            <person name="Tice H."/>
            <person name="Bruce D."/>
            <person name="Goodwin L."/>
            <person name="Pitluck S."/>
            <person name="Schmutz J."/>
            <person name="Larimer F."/>
            <person name="Land M."/>
            <person name="Hauser L."/>
            <person name="Kyrpides N."/>
            <person name="Ovchinnikova G."/>
            <person name="Zhao F."/>
            <person name="Li T."/>
            <person name="Liu Z."/>
            <person name="Overmann J."/>
            <person name="Bryant D.A."/>
            <person name="Richardson P."/>
        </authorList>
    </citation>
    <scope>NUCLEOTIDE SEQUENCE [LARGE SCALE GENOMIC DNA]</scope>
    <source>
        <strain>DSM 245 / NBRC 103803 / 6330</strain>
    </source>
</reference>
<organism>
    <name type="scientific">Chlorobium limicola (strain DSM 245 / NBRC 103803 / 6330)</name>
    <dbReference type="NCBI Taxonomy" id="290315"/>
    <lineage>
        <taxon>Bacteria</taxon>
        <taxon>Pseudomonadati</taxon>
        <taxon>Chlorobiota</taxon>
        <taxon>Chlorobiia</taxon>
        <taxon>Chlorobiales</taxon>
        <taxon>Chlorobiaceae</taxon>
        <taxon>Chlorobium/Pelodictyon group</taxon>
        <taxon>Chlorobium</taxon>
    </lineage>
</organism>
<keyword id="KW-0687">Ribonucleoprotein</keyword>
<keyword id="KW-0689">Ribosomal protein</keyword>
<keyword id="KW-0694">RNA-binding</keyword>
<keyword id="KW-0699">rRNA-binding</keyword>
<feature type="chain" id="PRO_1000126584" description="Large ribosomal subunit protein bL31">
    <location>
        <begin position="1"/>
        <end position="75"/>
    </location>
</feature>
<gene>
    <name evidence="1" type="primary">rpmE</name>
    <name type="ordered locus">Clim_0385</name>
</gene>
<proteinExistence type="inferred from homology"/>
<accession>B3EFU5</accession>
<sequence>MKQDIHPKYTKVTVNCANCGNAFETRSTRNTIKVDICNNCHPFYTGKQMLVDTAGRVERFNKRFAKSTASQAKAQ</sequence>